<dbReference type="EMBL" id="AAFW02000020">
    <property type="protein sequence ID" value="EDN64485.1"/>
    <property type="molecule type" value="Genomic_DNA"/>
</dbReference>
<dbReference type="SMR" id="A6ZMF5"/>
<dbReference type="HOGENOM" id="CLU_487522_0_0_1"/>
<dbReference type="OrthoDB" id="36829at4893"/>
<dbReference type="Proteomes" id="UP000007060">
    <property type="component" value="Unassembled WGS sequence"/>
</dbReference>
<dbReference type="GO" id="GO:0005743">
    <property type="term" value="C:mitochondrial inner membrane"/>
    <property type="evidence" value="ECO:0007669"/>
    <property type="project" value="UniProtKB-SubCell"/>
</dbReference>
<dbReference type="GO" id="GO:0140053">
    <property type="term" value="P:mitochondrial gene expression"/>
    <property type="evidence" value="ECO:0007669"/>
    <property type="project" value="InterPro"/>
</dbReference>
<dbReference type="GO" id="GO:0048255">
    <property type="term" value="P:mRNA stabilization"/>
    <property type="evidence" value="ECO:0007669"/>
    <property type="project" value="InterPro"/>
</dbReference>
<dbReference type="Gene3D" id="3.30.460.10">
    <property type="entry name" value="Beta Polymerase, domain 2"/>
    <property type="match status" value="1"/>
</dbReference>
<dbReference type="InterPro" id="IPR040152">
    <property type="entry name" value="Atp25"/>
</dbReference>
<dbReference type="InterPro" id="IPR025210">
    <property type="entry name" value="ATP25_mRNA_stabil_dom"/>
</dbReference>
<dbReference type="InterPro" id="IPR043519">
    <property type="entry name" value="NT_sf"/>
</dbReference>
<dbReference type="PANTHER" id="PTHR28087">
    <property type="entry name" value="ATPASE SYNTHESIS PROTEIN 25, MITOCHONDRIAL"/>
    <property type="match status" value="1"/>
</dbReference>
<dbReference type="PANTHER" id="PTHR28087:SF1">
    <property type="entry name" value="ATPASE SYNTHESIS PROTEIN 25, MITOCHONDRIAL"/>
    <property type="match status" value="1"/>
</dbReference>
<dbReference type="Pfam" id="PF13929">
    <property type="entry name" value="mRNA_stabil"/>
    <property type="match status" value="1"/>
</dbReference>
<dbReference type="Pfam" id="PF02410">
    <property type="entry name" value="RsfS"/>
    <property type="match status" value="1"/>
</dbReference>
<dbReference type="SUPFAM" id="SSF81301">
    <property type="entry name" value="Nucleotidyltransferase"/>
    <property type="match status" value="1"/>
</dbReference>
<sequence>MNKFCLLPFHGKRIGVANIPFTILLKKGPYFLHSHITAVYYSTKGKNDSHEQSRVSKKSTFTPLETPWYLRIVDNEKELMEGKKNNHHTMNKELEIPKTSPNSLRKIADLLTGKLGLDDFLVFDLRKKSPNSVSAVNKLGDFMVICTARSTKHCHKSFLELNKFLKHEFCSSAYVEGNFNERQESRRKRRLARKSNLSKLLGRSSECSAKDLNSEAWYMIDCRVDGIFVNILTQRRRNELNLEELYAPENEKSKFQNIDSGNVPTISGVNEISSNNNILLGLRRLAQQRRRYSTINPNGLSNLRYFLQKEDFKGANKIIQSSSGTETHNIRTLEHVKNTLKDLVGQEKKVDVVQWKSLFDEHSTFLTINQSAAYWPLRLEYAILLNKADPQFYSDRVFLKDYLLLKKSLGQELIREDLIALLEMVLKTQHSSHSYFNLVKQNRVIIRALNLFKGLQTEDNGSVVYDEEVISLLLNSMVADERVKLRSLYETIDHIFQTFGDKLTSGMIVSILQNLAKIKDWNKLLQVWEAITPTEGEGQDKRPWNEFINVINQSGDSHVISKIVNNGHLLWIRRLNVNVTPELCNSIKALLKTAGMENSTLEEFLVRGKNNQ</sequence>
<reference key="1">
    <citation type="journal article" date="2007" name="Proc. Natl. Acad. Sci. U.S.A.">
        <title>Genome sequencing and comparative analysis of Saccharomyces cerevisiae strain YJM789.</title>
        <authorList>
            <person name="Wei W."/>
            <person name="McCusker J.H."/>
            <person name="Hyman R.W."/>
            <person name="Jones T."/>
            <person name="Ning Y."/>
            <person name="Cao Z."/>
            <person name="Gu Z."/>
            <person name="Bruno D."/>
            <person name="Miranda M."/>
            <person name="Nguyen M."/>
            <person name="Wilhelmy J."/>
            <person name="Komp C."/>
            <person name="Tamse R."/>
            <person name="Wang X."/>
            <person name="Jia P."/>
            <person name="Luedi P."/>
            <person name="Oefner P.J."/>
            <person name="David L."/>
            <person name="Dietrich F.S."/>
            <person name="Li Y."/>
            <person name="Davis R.W."/>
            <person name="Steinmetz L.M."/>
        </authorList>
    </citation>
    <scope>NUCLEOTIDE SEQUENCE [LARGE SCALE GENOMIC DNA]</scope>
    <source>
        <strain>YJM789</strain>
    </source>
</reference>
<feature type="transit peptide" description="Mitochondrion" evidence="2">
    <location>
        <begin position="1"/>
        <end position="14"/>
    </location>
</feature>
<feature type="chain" id="PRO_0000404495" description="ATPase synthesis protein 25, mitochondrial">
    <location>
        <begin position="15"/>
        <end position="612"/>
    </location>
</feature>
<protein>
    <recommendedName>
        <fullName>ATPase synthesis protein 25, mitochondrial</fullName>
    </recommendedName>
    <alternativeName>
        <fullName>OLI1 mRNA stabilization factor</fullName>
    </alternativeName>
</protein>
<gene>
    <name type="primary">ATP25</name>
    <name type="ORF">SCY_4267</name>
</gene>
<proteinExistence type="inferred from homology"/>
<keyword id="KW-0472">Membrane</keyword>
<keyword id="KW-0496">Mitochondrion</keyword>
<keyword id="KW-0999">Mitochondrion inner membrane</keyword>
<keyword id="KW-0809">Transit peptide</keyword>
<organism>
    <name type="scientific">Saccharomyces cerevisiae (strain YJM789)</name>
    <name type="common">Baker's yeast</name>
    <dbReference type="NCBI Taxonomy" id="307796"/>
    <lineage>
        <taxon>Eukaryota</taxon>
        <taxon>Fungi</taxon>
        <taxon>Dikarya</taxon>
        <taxon>Ascomycota</taxon>
        <taxon>Saccharomycotina</taxon>
        <taxon>Saccharomycetes</taxon>
        <taxon>Saccharomycetales</taxon>
        <taxon>Saccharomycetaceae</taxon>
        <taxon>Saccharomyces</taxon>
    </lineage>
</organism>
<name>ATP25_YEAS7</name>
<comment type="function">
    <text evidence="1">mRNA stabilization factor specific for the 0.95 kb OLI1 mRNA. Also involved in OLI1 ring formation (By similarity).</text>
</comment>
<comment type="subcellular location">
    <subcellularLocation>
        <location evidence="1">Mitochondrion inner membrane</location>
        <topology evidence="1">Peripheral membrane protein</topology>
        <orientation evidence="1">Matrix side</orientation>
    </subcellularLocation>
</comment>
<comment type="similarity">
    <text evidence="3">Belongs to the ATP25 family.</text>
</comment>
<accession>A6ZMF5</accession>
<evidence type="ECO:0000250" key="1"/>
<evidence type="ECO:0000255" key="2"/>
<evidence type="ECO:0000305" key="3"/>